<protein>
    <recommendedName>
        <fullName evidence="1">Ribonuclease HII</fullName>
        <shortName evidence="1">RNase HII</shortName>
        <ecNumber evidence="1">3.1.26.4</ecNumber>
    </recommendedName>
</protein>
<proteinExistence type="inferred from homology"/>
<gene>
    <name evidence="1" type="primary">rnhB</name>
    <name type="ordered locus">BQ03420</name>
</gene>
<name>RNH2_BARQU</name>
<feature type="chain" id="PRO_0000235700" description="Ribonuclease HII">
    <location>
        <begin position="1"/>
        <end position="223"/>
    </location>
</feature>
<feature type="domain" description="RNase H type-2" evidence="2">
    <location>
        <begin position="32"/>
        <end position="223"/>
    </location>
</feature>
<feature type="binding site" evidence="1">
    <location>
        <position position="38"/>
    </location>
    <ligand>
        <name>a divalent metal cation</name>
        <dbReference type="ChEBI" id="CHEBI:60240"/>
    </ligand>
</feature>
<feature type="binding site" evidence="1">
    <location>
        <position position="39"/>
    </location>
    <ligand>
        <name>a divalent metal cation</name>
        <dbReference type="ChEBI" id="CHEBI:60240"/>
    </ligand>
</feature>
<feature type="binding site" evidence="1">
    <location>
        <position position="130"/>
    </location>
    <ligand>
        <name>a divalent metal cation</name>
        <dbReference type="ChEBI" id="CHEBI:60240"/>
    </ligand>
</feature>
<keyword id="KW-0963">Cytoplasm</keyword>
<keyword id="KW-0255">Endonuclease</keyword>
<keyword id="KW-0378">Hydrolase</keyword>
<keyword id="KW-0464">Manganese</keyword>
<keyword id="KW-0479">Metal-binding</keyword>
<keyword id="KW-0540">Nuclease</keyword>
<reference key="1">
    <citation type="journal article" date="2004" name="Proc. Natl. Acad. Sci. U.S.A.">
        <title>The louse-borne human pathogen Bartonella quintana is a genomic derivative of the zoonotic agent Bartonella henselae.</title>
        <authorList>
            <person name="Alsmark U.C.M."/>
            <person name="Frank A.C."/>
            <person name="Karlberg E.O."/>
            <person name="Legault B.-A."/>
            <person name="Ardell D.H."/>
            <person name="Canbaeck B."/>
            <person name="Eriksson A.-S."/>
            <person name="Naeslund A.K."/>
            <person name="Handley S.A."/>
            <person name="Huvet M."/>
            <person name="La Scola B."/>
            <person name="Holmberg M."/>
            <person name="Andersson S.G.E."/>
        </authorList>
    </citation>
    <scope>NUCLEOTIDE SEQUENCE [LARGE SCALE GENOMIC DNA]</scope>
    <source>
        <strain>Toulouse</strain>
    </source>
</reference>
<evidence type="ECO:0000255" key="1">
    <source>
        <dbReference type="HAMAP-Rule" id="MF_00052"/>
    </source>
</evidence>
<evidence type="ECO:0000255" key="2">
    <source>
        <dbReference type="PROSITE-ProRule" id="PRU01319"/>
    </source>
</evidence>
<sequence length="223" mass="24498">MSHRFDNLPDLFNLPLKPNFSCELDLQKQGFFHIAGVDEVGRGPLAGPVVTAAVILDKDHVPDGLNDSKKLSAQRRNELYCEILQSALAVSIASLCARTIDQSDIRKATLEAMRRCVTGLAIPAHYALIDGRDIPFQLPCPATALIKGDQHSVSIAAASIIAKVTRDRMMKCAGQIYKNYGLEKHVGYATLAHRIALDKYGPVVGLHRYSFAPLKGRFRDNMS</sequence>
<dbReference type="EC" id="3.1.26.4" evidence="1"/>
<dbReference type="EMBL" id="BX897700">
    <property type="protein sequence ID" value="CAF25842.1"/>
    <property type="molecule type" value="Genomic_DNA"/>
</dbReference>
<dbReference type="RefSeq" id="WP_011179136.1">
    <property type="nucleotide sequence ID" value="NC_005955.1"/>
</dbReference>
<dbReference type="SMR" id="Q6G0E6"/>
<dbReference type="KEGG" id="bqu:BQ03420"/>
<dbReference type="eggNOG" id="COG0164">
    <property type="taxonomic scope" value="Bacteria"/>
</dbReference>
<dbReference type="HOGENOM" id="CLU_036532_3_2_5"/>
<dbReference type="OrthoDB" id="9803420at2"/>
<dbReference type="Proteomes" id="UP000000597">
    <property type="component" value="Chromosome"/>
</dbReference>
<dbReference type="GO" id="GO:0005737">
    <property type="term" value="C:cytoplasm"/>
    <property type="evidence" value="ECO:0007669"/>
    <property type="project" value="UniProtKB-SubCell"/>
</dbReference>
<dbReference type="GO" id="GO:0032299">
    <property type="term" value="C:ribonuclease H2 complex"/>
    <property type="evidence" value="ECO:0007669"/>
    <property type="project" value="TreeGrafter"/>
</dbReference>
<dbReference type="GO" id="GO:0030145">
    <property type="term" value="F:manganese ion binding"/>
    <property type="evidence" value="ECO:0007669"/>
    <property type="project" value="UniProtKB-UniRule"/>
</dbReference>
<dbReference type="GO" id="GO:0003723">
    <property type="term" value="F:RNA binding"/>
    <property type="evidence" value="ECO:0007669"/>
    <property type="project" value="InterPro"/>
</dbReference>
<dbReference type="GO" id="GO:0004523">
    <property type="term" value="F:RNA-DNA hybrid ribonuclease activity"/>
    <property type="evidence" value="ECO:0007669"/>
    <property type="project" value="UniProtKB-UniRule"/>
</dbReference>
<dbReference type="GO" id="GO:0043137">
    <property type="term" value="P:DNA replication, removal of RNA primer"/>
    <property type="evidence" value="ECO:0007669"/>
    <property type="project" value="TreeGrafter"/>
</dbReference>
<dbReference type="GO" id="GO:0006298">
    <property type="term" value="P:mismatch repair"/>
    <property type="evidence" value="ECO:0007669"/>
    <property type="project" value="TreeGrafter"/>
</dbReference>
<dbReference type="CDD" id="cd07182">
    <property type="entry name" value="RNase_HII_bacteria_HII_like"/>
    <property type="match status" value="1"/>
</dbReference>
<dbReference type="Gene3D" id="3.30.420.10">
    <property type="entry name" value="Ribonuclease H-like superfamily/Ribonuclease H"/>
    <property type="match status" value="1"/>
</dbReference>
<dbReference type="HAMAP" id="MF_00052_B">
    <property type="entry name" value="RNase_HII_B"/>
    <property type="match status" value="1"/>
</dbReference>
<dbReference type="InterPro" id="IPR022898">
    <property type="entry name" value="RNase_HII"/>
</dbReference>
<dbReference type="InterPro" id="IPR001352">
    <property type="entry name" value="RNase_HII/HIII"/>
</dbReference>
<dbReference type="InterPro" id="IPR024567">
    <property type="entry name" value="RNase_HII/HIII_dom"/>
</dbReference>
<dbReference type="InterPro" id="IPR012337">
    <property type="entry name" value="RNaseH-like_sf"/>
</dbReference>
<dbReference type="InterPro" id="IPR036397">
    <property type="entry name" value="RNaseH_sf"/>
</dbReference>
<dbReference type="NCBIfam" id="NF000595">
    <property type="entry name" value="PRK00015.1-3"/>
    <property type="match status" value="1"/>
</dbReference>
<dbReference type="PANTHER" id="PTHR10954">
    <property type="entry name" value="RIBONUCLEASE H2 SUBUNIT A"/>
    <property type="match status" value="1"/>
</dbReference>
<dbReference type="PANTHER" id="PTHR10954:SF18">
    <property type="entry name" value="RIBONUCLEASE HII"/>
    <property type="match status" value="1"/>
</dbReference>
<dbReference type="Pfam" id="PF01351">
    <property type="entry name" value="RNase_HII"/>
    <property type="match status" value="1"/>
</dbReference>
<dbReference type="SUPFAM" id="SSF53098">
    <property type="entry name" value="Ribonuclease H-like"/>
    <property type="match status" value="1"/>
</dbReference>
<dbReference type="PROSITE" id="PS51975">
    <property type="entry name" value="RNASE_H_2"/>
    <property type="match status" value="1"/>
</dbReference>
<organism>
    <name type="scientific">Bartonella quintana (strain Toulouse)</name>
    <name type="common">Rochalimaea quintana</name>
    <dbReference type="NCBI Taxonomy" id="283165"/>
    <lineage>
        <taxon>Bacteria</taxon>
        <taxon>Pseudomonadati</taxon>
        <taxon>Pseudomonadota</taxon>
        <taxon>Alphaproteobacteria</taxon>
        <taxon>Hyphomicrobiales</taxon>
        <taxon>Bartonellaceae</taxon>
        <taxon>Bartonella</taxon>
    </lineage>
</organism>
<comment type="function">
    <text evidence="1">Endonuclease that specifically degrades the RNA of RNA-DNA hybrids.</text>
</comment>
<comment type="catalytic activity">
    <reaction evidence="1">
        <text>Endonucleolytic cleavage to 5'-phosphomonoester.</text>
        <dbReference type="EC" id="3.1.26.4"/>
    </reaction>
</comment>
<comment type="cofactor">
    <cofactor evidence="1">
        <name>Mn(2+)</name>
        <dbReference type="ChEBI" id="CHEBI:29035"/>
    </cofactor>
    <cofactor evidence="1">
        <name>Mg(2+)</name>
        <dbReference type="ChEBI" id="CHEBI:18420"/>
    </cofactor>
    <text evidence="1">Manganese or magnesium. Binds 1 divalent metal ion per monomer in the absence of substrate. May bind a second metal ion after substrate binding.</text>
</comment>
<comment type="subcellular location">
    <subcellularLocation>
        <location evidence="1">Cytoplasm</location>
    </subcellularLocation>
</comment>
<comment type="similarity">
    <text evidence="1">Belongs to the RNase HII family.</text>
</comment>
<accession>Q6G0E6</accession>